<protein>
    <recommendedName>
        <fullName evidence="1">Putative pre-16S rRNA nuclease</fullName>
        <ecNumber evidence="1">3.1.-.-</ecNumber>
    </recommendedName>
</protein>
<keyword id="KW-0963">Cytoplasm</keyword>
<keyword id="KW-0378">Hydrolase</keyword>
<keyword id="KW-0540">Nuclease</keyword>
<keyword id="KW-1185">Reference proteome</keyword>
<keyword id="KW-0690">Ribosome biogenesis</keyword>
<gene>
    <name type="ordered locus">Lxx10920</name>
</gene>
<accession>Q6AFA0</accession>
<proteinExistence type="inferred from homology"/>
<reference key="1">
    <citation type="journal article" date="2004" name="Mol. Plant Microbe Interact.">
        <title>The genome sequence of the Gram-positive sugarcane pathogen Leifsonia xyli subsp. xyli.</title>
        <authorList>
            <person name="Monteiro-Vitorello C.B."/>
            <person name="Camargo L.E.A."/>
            <person name="Van Sluys M.A."/>
            <person name="Kitajima J.P."/>
            <person name="Truffi D."/>
            <person name="do Amaral A.M."/>
            <person name="Harakava R."/>
            <person name="de Oliveira J.C.F."/>
            <person name="Wood D."/>
            <person name="de Oliveira M.C."/>
            <person name="Miyaki C.Y."/>
            <person name="Takita M.A."/>
            <person name="da Silva A.C.R."/>
            <person name="Furlan L.R."/>
            <person name="Carraro D.M."/>
            <person name="Camarotte G."/>
            <person name="Almeida N.F. Jr."/>
            <person name="Carrer H."/>
            <person name="Coutinho L.L."/>
            <person name="El-Dorry H.A."/>
            <person name="Ferro M.I.T."/>
            <person name="Gagliardi P.R."/>
            <person name="Giglioti E."/>
            <person name="Goldman M.H.S."/>
            <person name="Goldman G.H."/>
            <person name="Kimura E.T."/>
            <person name="Ferro E.S."/>
            <person name="Kuramae E.E."/>
            <person name="Lemos E.G.M."/>
            <person name="Lemos M.V.F."/>
            <person name="Mauro S.M.Z."/>
            <person name="Machado M.A."/>
            <person name="Marino C.L."/>
            <person name="Menck C.F."/>
            <person name="Nunes L.R."/>
            <person name="Oliveira R.C."/>
            <person name="Pereira G.G."/>
            <person name="Siqueira W."/>
            <person name="de Souza A.A."/>
            <person name="Tsai S.M."/>
            <person name="Zanca A.S."/>
            <person name="Simpson A.J.G."/>
            <person name="Brumbley S.M."/>
            <person name="Setubal J.C."/>
        </authorList>
    </citation>
    <scope>NUCLEOTIDE SEQUENCE [LARGE SCALE GENOMIC DNA]</scope>
    <source>
        <strain>CTCB07</strain>
    </source>
</reference>
<comment type="function">
    <text evidence="1">Could be a nuclease involved in processing of the 5'-end of pre-16S rRNA.</text>
</comment>
<comment type="subcellular location">
    <subcellularLocation>
        <location evidence="1">Cytoplasm</location>
    </subcellularLocation>
</comment>
<comment type="similarity">
    <text evidence="1">Belongs to the YqgF nuclease family.</text>
</comment>
<name>YQGF_LEIXX</name>
<evidence type="ECO:0000255" key="1">
    <source>
        <dbReference type="HAMAP-Rule" id="MF_00651"/>
    </source>
</evidence>
<evidence type="ECO:0000256" key="2">
    <source>
        <dbReference type="SAM" id="MobiDB-lite"/>
    </source>
</evidence>
<dbReference type="EC" id="3.1.-.-" evidence="1"/>
<dbReference type="EMBL" id="AE016822">
    <property type="protein sequence ID" value="AAT88945.1"/>
    <property type="molecule type" value="Genomic_DNA"/>
</dbReference>
<dbReference type="RefSeq" id="WP_011185941.1">
    <property type="nucleotide sequence ID" value="NC_006087.1"/>
</dbReference>
<dbReference type="SMR" id="Q6AFA0"/>
<dbReference type="STRING" id="281090.Lxx10920"/>
<dbReference type="KEGG" id="lxx:Lxx10920"/>
<dbReference type="eggNOG" id="COG0816">
    <property type="taxonomic scope" value="Bacteria"/>
</dbReference>
<dbReference type="HOGENOM" id="CLU_098240_0_0_11"/>
<dbReference type="Proteomes" id="UP000001306">
    <property type="component" value="Chromosome"/>
</dbReference>
<dbReference type="GO" id="GO:0005829">
    <property type="term" value="C:cytosol"/>
    <property type="evidence" value="ECO:0007669"/>
    <property type="project" value="TreeGrafter"/>
</dbReference>
<dbReference type="GO" id="GO:0004518">
    <property type="term" value="F:nuclease activity"/>
    <property type="evidence" value="ECO:0007669"/>
    <property type="project" value="UniProtKB-KW"/>
</dbReference>
<dbReference type="GO" id="GO:0000967">
    <property type="term" value="P:rRNA 5'-end processing"/>
    <property type="evidence" value="ECO:0007669"/>
    <property type="project" value="UniProtKB-UniRule"/>
</dbReference>
<dbReference type="CDD" id="cd16964">
    <property type="entry name" value="YqgF"/>
    <property type="match status" value="1"/>
</dbReference>
<dbReference type="Gene3D" id="3.30.420.140">
    <property type="entry name" value="YqgF/RNase H-like domain"/>
    <property type="match status" value="1"/>
</dbReference>
<dbReference type="HAMAP" id="MF_00651">
    <property type="entry name" value="Nuclease_YqgF"/>
    <property type="match status" value="1"/>
</dbReference>
<dbReference type="InterPro" id="IPR012337">
    <property type="entry name" value="RNaseH-like_sf"/>
</dbReference>
<dbReference type="InterPro" id="IPR005227">
    <property type="entry name" value="YqgF"/>
</dbReference>
<dbReference type="InterPro" id="IPR006641">
    <property type="entry name" value="YqgF/RNaseH-like_dom"/>
</dbReference>
<dbReference type="InterPro" id="IPR037027">
    <property type="entry name" value="YqgF/RNaseH-like_dom_sf"/>
</dbReference>
<dbReference type="NCBIfam" id="TIGR00250">
    <property type="entry name" value="RNAse_H_YqgF"/>
    <property type="match status" value="1"/>
</dbReference>
<dbReference type="PANTHER" id="PTHR33317">
    <property type="entry name" value="POLYNUCLEOTIDYL TRANSFERASE, RIBONUCLEASE H-LIKE SUPERFAMILY PROTEIN"/>
    <property type="match status" value="1"/>
</dbReference>
<dbReference type="PANTHER" id="PTHR33317:SF4">
    <property type="entry name" value="POLYNUCLEOTIDYL TRANSFERASE, RIBONUCLEASE H-LIKE SUPERFAMILY PROTEIN"/>
    <property type="match status" value="1"/>
</dbReference>
<dbReference type="Pfam" id="PF03652">
    <property type="entry name" value="RuvX"/>
    <property type="match status" value="1"/>
</dbReference>
<dbReference type="SMART" id="SM00732">
    <property type="entry name" value="YqgFc"/>
    <property type="match status" value="1"/>
</dbReference>
<dbReference type="SUPFAM" id="SSF53098">
    <property type="entry name" value="Ribonuclease H-like"/>
    <property type="match status" value="1"/>
</dbReference>
<organism>
    <name type="scientific">Leifsonia xyli subsp. xyli (strain CTCB07)</name>
    <dbReference type="NCBI Taxonomy" id="281090"/>
    <lineage>
        <taxon>Bacteria</taxon>
        <taxon>Bacillati</taxon>
        <taxon>Actinomycetota</taxon>
        <taxon>Actinomycetes</taxon>
        <taxon>Micrococcales</taxon>
        <taxon>Microbacteriaceae</taxon>
        <taxon>Leifsonia</taxon>
    </lineage>
</organism>
<feature type="chain" id="PRO_0000172083" description="Putative pre-16S rRNA nuclease">
    <location>
        <begin position="1"/>
        <end position="155"/>
    </location>
</feature>
<feature type="region of interest" description="Disordered" evidence="2">
    <location>
        <begin position="136"/>
        <end position="155"/>
    </location>
</feature>
<sequence length="155" mass="16012">MRSGVRLGIDVGTVRIGVSCSDLHGTLATPYETVARSGDAADRRRIAEIVTDLGVVEIIVGLPLALSGVHTASTADAVAFAEALVVEVGAPVRLVDERLSTVSAHSALRSSGKNAKSSRPVVDQAAATIILQHALDAERATSRPPGHPVEPRIGP</sequence>